<keyword id="KW-0418">Kinase</keyword>
<keyword id="KW-0547">Nucleotide-binding</keyword>
<keyword id="KW-0723">Serine/threonine-protein kinase</keyword>
<keyword id="KW-0808">Transferase</keyword>
<gene>
    <name type="ordered locus">A1I_00005</name>
</gene>
<reference key="1">
    <citation type="submission" date="2007-09" db="EMBL/GenBank/DDBJ databases">
        <title>Complete genome sequencing of Rickettsia bellii.</title>
        <authorList>
            <person name="Madan A."/>
            <person name="Lee H."/>
            <person name="Madan A."/>
            <person name="Yoon J.-G."/>
            <person name="Ryu G.-Y."/>
            <person name="Dasch G."/>
            <person name="Ereemeva M."/>
        </authorList>
    </citation>
    <scope>NUCLEOTIDE SEQUENCE [LARGE SCALE GENOMIC DNA]</scope>
    <source>
        <strain>OSU 85-389</strain>
    </source>
</reference>
<sequence length="273" mass="31582">MTKLIIHLVSDSSVQTAKSAAHSSLAQFTSLKPKLYHWPMIRNSELLKEVLSNIESKHGIVLYTIADQELRKTLTKFCYELKIPCISVIGKIIKEMSVFSGIEIEKEQNYNYKFDKTYFDTLNAIDYAIRHDDGQLLNELQFADIVLIGPSRTSKTPTSVFLAYNGLKTANIPYVYNCPFPDFIEKDIDQLVVGLVINPNRLIEIRETRLNLLQINENRNYTDFNIVQKECLEVKKICELRNWPVIDVSTKSIEETAALIMRIYYNKKNKYNK</sequence>
<accession>A8GUB7</accession>
<protein>
    <recommendedName>
        <fullName evidence="1">Putative pyruvate, phosphate dikinase regulatory protein</fullName>
        <shortName evidence="1">PPDK regulatory protein</shortName>
        <ecNumber evidence="1">2.7.11.32</ecNumber>
        <ecNumber evidence="1">2.7.4.27</ecNumber>
    </recommendedName>
</protein>
<comment type="function">
    <text evidence="1">Bifunctional serine/threonine kinase and phosphorylase involved in the regulation of the pyruvate, phosphate dikinase (PPDK) by catalyzing its phosphorylation/dephosphorylation.</text>
</comment>
<comment type="catalytic activity">
    <reaction evidence="1">
        <text>N(tele)-phospho-L-histidyl/L-threonyl-[pyruvate, phosphate dikinase] + ADP = N(tele)-phospho-L-histidyl/O-phospho-L-threonyl-[pyruvate, phosphate dikinase] + AMP + H(+)</text>
        <dbReference type="Rhea" id="RHEA:43692"/>
        <dbReference type="Rhea" id="RHEA-COMP:10650"/>
        <dbReference type="Rhea" id="RHEA-COMP:10651"/>
        <dbReference type="ChEBI" id="CHEBI:15378"/>
        <dbReference type="ChEBI" id="CHEBI:30013"/>
        <dbReference type="ChEBI" id="CHEBI:61977"/>
        <dbReference type="ChEBI" id="CHEBI:83586"/>
        <dbReference type="ChEBI" id="CHEBI:456215"/>
        <dbReference type="ChEBI" id="CHEBI:456216"/>
        <dbReference type="EC" id="2.7.11.32"/>
    </reaction>
</comment>
<comment type="catalytic activity">
    <reaction evidence="1">
        <text>N(tele)-phospho-L-histidyl/O-phospho-L-threonyl-[pyruvate, phosphate dikinase] + phosphate + H(+) = N(tele)-phospho-L-histidyl/L-threonyl-[pyruvate, phosphate dikinase] + diphosphate</text>
        <dbReference type="Rhea" id="RHEA:43696"/>
        <dbReference type="Rhea" id="RHEA-COMP:10650"/>
        <dbReference type="Rhea" id="RHEA-COMP:10651"/>
        <dbReference type="ChEBI" id="CHEBI:15378"/>
        <dbReference type="ChEBI" id="CHEBI:30013"/>
        <dbReference type="ChEBI" id="CHEBI:33019"/>
        <dbReference type="ChEBI" id="CHEBI:43474"/>
        <dbReference type="ChEBI" id="CHEBI:61977"/>
        <dbReference type="ChEBI" id="CHEBI:83586"/>
        <dbReference type="EC" id="2.7.4.27"/>
    </reaction>
</comment>
<comment type="similarity">
    <text evidence="1">Belongs to the pyruvate, phosphate/water dikinase regulatory protein family. PDRP subfamily.</text>
</comment>
<evidence type="ECO:0000255" key="1">
    <source>
        <dbReference type="HAMAP-Rule" id="MF_00921"/>
    </source>
</evidence>
<name>PDRP_RICB8</name>
<feature type="chain" id="PRO_1000073008" description="Putative pyruvate, phosphate dikinase regulatory protein">
    <location>
        <begin position="1"/>
        <end position="273"/>
    </location>
</feature>
<feature type="binding site" evidence="1">
    <location>
        <begin position="149"/>
        <end position="156"/>
    </location>
    <ligand>
        <name>ADP</name>
        <dbReference type="ChEBI" id="CHEBI:456216"/>
    </ligand>
</feature>
<dbReference type="EC" id="2.7.11.32" evidence="1"/>
<dbReference type="EC" id="2.7.4.27" evidence="1"/>
<dbReference type="EMBL" id="CP000849">
    <property type="protein sequence ID" value="ABV76942.1"/>
    <property type="molecule type" value="Genomic_DNA"/>
</dbReference>
<dbReference type="RefSeq" id="WP_012151476.1">
    <property type="nucleotide sequence ID" value="NC_009883.1"/>
</dbReference>
<dbReference type="SMR" id="A8GUB7"/>
<dbReference type="KEGG" id="rbo:A1I_00005"/>
<dbReference type="HOGENOM" id="CLU_046206_2_0_5"/>
<dbReference type="GO" id="GO:0043531">
    <property type="term" value="F:ADP binding"/>
    <property type="evidence" value="ECO:0007669"/>
    <property type="project" value="UniProtKB-UniRule"/>
</dbReference>
<dbReference type="GO" id="GO:0005524">
    <property type="term" value="F:ATP binding"/>
    <property type="evidence" value="ECO:0007669"/>
    <property type="project" value="InterPro"/>
</dbReference>
<dbReference type="GO" id="GO:0016776">
    <property type="term" value="F:phosphotransferase activity, phosphate group as acceptor"/>
    <property type="evidence" value="ECO:0007669"/>
    <property type="project" value="UniProtKB-UniRule"/>
</dbReference>
<dbReference type="GO" id="GO:0004674">
    <property type="term" value="F:protein serine/threonine kinase activity"/>
    <property type="evidence" value="ECO:0007669"/>
    <property type="project" value="UniProtKB-UniRule"/>
</dbReference>
<dbReference type="HAMAP" id="MF_00921">
    <property type="entry name" value="PDRP"/>
    <property type="match status" value="1"/>
</dbReference>
<dbReference type="InterPro" id="IPR005177">
    <property type="entry name" value="Kinase-pyrophosphorylase"/>
</dbReference>
<dbReference type="InterPro" id="IPR026565">
    <property type="entry name" value="PPDK_reg"/>
</dbReference>
<dbReference type="NCBIfam" id="NF003742">
    <property type="entry name" value="PRK05339.1"/>
    <property type="match status" value="1"/>
</dbReference>
<dbReference type="PANTHER" id="PTHR31756">
    <property type="entry name" value="PYRUVATE, PHOSPHATE DIKINASE REGULATORY PROTEIN 1, CHLOROPLASTIC"/>
    <property type="match status" value="1"/>
</dbReference>
<dbReference type="PANTHER" id="PTHR31756:SF3">
    <property type="entry name" value="PYRUVATE, PHOSPHATE DIKINASE REGULATORY PROTEIN 1, CHLOROPLASTIC"/>
    <property type="match status" value="1"/>
</dbReference>
<dbReference type="Pfam" id="PF03618">
    <property type="entry name" value="Kinase-PPPase"/>
    <property type="match status" value="1"/>
</dbReference>
<organism>
    <name type="scientific">Rickettsia bellii (strain OSU 85-389)</name>
    <dbReference type="NCBI Taxonomy" id="391896"/>
    <lineage>
        <taxon>Bacteria</taxon>
        <taxon>Pseudomonadati</taxon>
        <taxon>Pseudomonadota</taxon>
        <taxon>Alphaproteobacteria</taxon>
        <taxon>Rickettsiales</taxon>
        <taxon>Rickettsiaceae</taxon>
        <taxon>Rickettsieae</taxon>
        <taxon>Rickettsia</taxon>
        <taxon>belli group</taxon>
    </lineage>
</organism>
<proteinExistence type="inferred from homology"/>